<comment type="function">
    <text evidence="1">Catalyzes the conversion of glucosamine-6-phosphate to glucosamine-1-phosphate.</text>
</comment>
<comment type="catalytic activity">
    <reaction evidence="1">
        <text>alpha-D-glucosamine 1-phosphate = D-glucosamine 6-phosphate</text>
        <dbReference type="Rhea" id="RHEA:23424"/>
        <dbReference type="ChEBI" id="CHEBI:58516"/>
        <dbReference type="ChEBI" id="CHEBI:58725"/>
        <dbReference type="EC" id="5.4.2.10"/>
    </reaction>
</comment>
<comment type="cofactor">
    <cofactor evidence="1">
        <name>Mg(2+)</name>
        <dbReference type="ChEBI" id="CHEBI:18420"/>
    </cofactor>
    <text evidence="1">Binds 1 Mg(2+) ion per subunit.</text>
</comment>
<comment type="PTM">
    <text evidence="1">Activated by phosphorylation.</text>
</comment>
<comment type="similarity">
    <text evidence="1">Belongs to the phosphohexose mutase family.</text>
</comment>
<gene>
    <name evidence="1" type="primary">glmM</name>
    <name type="ordered locus">cauri_0457</name>
</gene>
<sequence>MTRLFGTDGVRGLANKKLTPILALRLGQAAAEVLTSDRESYERRPLAIIGRDPRVSGEMLDAAIASGLASRGVDVVRVGVLPTPAIAFLTDDFGADLGVMISASHNPMPDNGIKFFSAGGKKLPDEVEDRIQAAMDNLTEDGPTATKIGRIISEAPDGRERYLKHLAEVVTTDLSGIKVVVDTANGAASKVAPQAYEAAGAEVVAIHNKPNAFNINEDCGSTHIEKTQEAVVEHGADLGLAHDGDADRCLAVDAEGNVVDGDQIMAILAVGMKEENDLRFNTLVATVMSNLGLKLAMQEQGIDIKETAVGDRYVLEELNRGDFSLGGEQSGHVVLPDDCTTGDGTLTGLSIMARMAKSGKSLKELASVMTVLPQVLINVPVSDKAVILNAPEVKEAIAAAEAELGETGRVLLRPSGTEELFRVMVEAAEKEQARKVAGKLAAVVAAV</sequence>
<evidence type="ECO:0000255" key="1">
    <source>
        <dbReference type="HAMAP-Rule" id="MF_01554"/>
    </source>
</evidence>
<organism>
    <name type="scientific">Corynebacterium aurimucosum (strain ATCC 700975 / DSM 44827 / CIP 107346 / CN-1)</name>
    <name type="common">Corynebacterium nigricans</name>
    <dbReference type="NCBI Taxonomy" id="548476"/>
    <lineage>
        <taxon>Bacteria</taxon>
        <taxon>Bacillati</taxon>
        <taxon>Actinomycetota</taxon>
        <taxon>Actinomycetes</taxon>
        <taxon>Mycobacteriales</taxon>
        <taxon>Corynebacteriaceae</taxon>
        <taxon>Corynebacterium</taxon>
    </lineage>
</organism>
<protein>
    <recommendedName>
        <fullName evidence="1">Phosphoglucosamine mutase</fullName>
        <ecNumber evidence="1">5.4.2.10</ecNumber>
    </recommendedName>
</protein>
<name>GLMM_CORA7</name>
<keyword id="KW-0413">Isomerase</keyword>
<keyword id="KW-0460">Magnesium</keyword>
<keyword id="KW-0479">Metal-binding</keyword>
<keyword id="KW-0597">Phosphoprotein</keyword>
<keyword id="KW-1185">Reference proteome</keyword>
<proteinExistence type="inferred from homology"/>
<feature type="chain" id="PRO_1000185362" description="Phosphoglucosamine mutase">
    <location>
        <begin position="1"/>
        <end position="447"/>
    </location>
</feature>
<feature type="active site" description="Phosphoserine intermediate" evidence="1">
    <location>
        <position position="104"/>
    </location>
</feature>
<feature type="binding site" description="via phosphate group" evidence="1">
    <location>
        <position position="104"/>
    </location>
    <ligand>
        <name>Mg(2+)</name>
        <dbReference type="ChEBI" id="CHEBI:18420"/>
    </ligand>
</feature>
<feature type="binding site" evidence="1">
    <location>
        <position position="243"/>
    </location>
    <ligand>
        <name>Mg(2+)</name>
        <dbReference type="ChEBI" id="CHEBI:18420"/>
    </ligand>
</feature>
<feature type="binding site" evidence="1">
    <location>
        <position position="245"/>
    </location>
    <ligand>
        <name>Mg(2+)</name>
        <dbReference type="ChEBI" id="CHEBI:18420"/>
    </ligand>
</feature>
<feature type="binding site" evidence="1">
    <location>
        <position position="247"/>
    </location>
    <ligand>
        <name>Mg(2+)</name>
        <dbReference type="ChEBI" id="CHEBI:18420"/>
    </ligand>
</feature>
<feature type="modified residue" description="Phosphoserine" evidence="1">
    <location>
        <position position="104"/>
    </location>
</feature>
<dbReference type="EC" id="5.4.2.10" evidence="1"/>
<dbReference type="EMBL" id="CP001601">
    <property type="protein sequence ID" value="ACP32054.1"/>
    <property type="molecule type" value="Genomic_DNA"/>
</dbReference>
<dbReference type="RefSeq" id="WP_010189502.1">
    <property type="nucleotide sequence ID" value="NC_012590.1"/>
</dbReference>
<dbReference type="SMR" id="C3PL50"/>
<dbReference type="STRING" id="548476.cauri_0457"/>
<dbReference type="GeneID" id="31923073"/>
<dbReference type="KEGG" id="car:cauri_0457"/>
<dbReference type="eggNOG" id="COG1109">
    <property type="taxonomic scope" value="Bacteria"/>
</dbReference>
<dbReference type="HOGENOM" id="CLU_016950_7_0_11"/>
<dbReference type="OrthoDB" id="9803322at2"/>
<dbReference type="Proteomes" id="UP000002077">
    <property type="component" value="Chromosome"/>
</dbReference>
<dbReference type="GO" id="GO:0005829">
    <property type="term" value="C:cytosol"/>
    <property type="evidence" value="ECO:0007669"/>
    <property type="project" value="TreeGrafter"/>
</dbReference>
<dbReference type="GO" id="GO:0000287">
    <property type="term" value="F:magnesium ion binding"/>
    <property type="evidence" value="ECO:0007669"/>
    <property type="project" value="UniProtKB-UniRule"/>
</dbReference>
<dbReference type="GO" id="GO:0008966">
    <property type="term" value="F:phosphoglucosamine mutase activity"/>
    <property type="evidence" value="ECO:0007669"/>
    <property type="project" value="UniProtKB-UniRule"/>
</dbReference>
<dbReference type="GO" id="GO:0004615">
    <property type="term" value="F:phosphomannomutase activity"/>
    <property type="evidence" value="ECO:0007669"/>
    <property type="project" value="TreeGrafter"/>
</dbReference>
<dbReference type="GO" id="GO:0005975">
    <property type="term" value="P:carbohydrate metabolic process"/>
    <property type="evidence" value="ECO:0007669"/>
    <property type="project" value="InterPro"/>
</dbReference>
<dbReference type="GO" id="GO:0009252">
    <property type="term" value="P:peptidoglycan biosynthetic process"/>
    <property type="evidence" value="ECO:0007669"/>
    <property type="project" value="TreeGrafter"/>
</dbReference>
<dbReference type="GO" id="GO:0006048">
    <property type="term" value="P:UDP-N-acetylglucosamine biosynthetic process"/>
    <property type="evidence" value="ECO:0007669"/>
    <property type="project" value="TreeGrafter"/>
</dbReference>
<dbReference type="CDD" id="cd05802">
    <property type="entry name" value="GlmM"/>
    <property type="match status" value="1"/>
</dbReference>
<dbReference type="FunFam" id="3.30.310.50:FF:000001">
    <property type="entry name" value="Phosphoglucosamine mutase"/>
    <property type="match status" value="1"/>
</dbReference>
<dbReference type="FunFam" id="3.40.120.10:FF:000001">
    <property type="entry name" value="Phosphoglucosamine mutase"/>
    <property type="match status" value="1"/>
</dbReference>
<dbReference type="FunFam" id="3.40.120.10:FF:000002">
    <property type="entry name" value="Phosphoglucosamine mutase"/>
    <property type="match status" value="1"/>
</dbReference>
<dbReference type="Gene3D" id="3.40.120.10">
    <property type="entry name" value="Alpha-D-Glucose-1,6-Bisphosphate, subunit A, domain 3"/>
    <property type="match status" value="3"/>
</dbReference>
<dbReference type="Gene3D" id="3.30.310.50">
    <property type="entry name" value="Alpha-D-phosphohexomutase, C-terminal domain"/>
    <property type="match status" value="1"/>
</dbReference>
<dbReference type="HAMAP" id="MF_01554_B">
    <property type="entry name" value="GlmM_B"/>
    <property type="match status" value="1"/>
</dbReference>
<dbReference type="InterPro" id="IPR005844">
    <property type="entry name" value="A-D-PHexomutase_a/b/a-I"/>
</dbReference>
<dbReference type="InterPro" id="IPR016055">
    <property type="entry name" value="A-D-PHexomutase_a/b/a-I/II/III"/>
</dbReference>
<dbReference type="InterPro" id="IPR005845">
    <property type="entry name" value="A-D-PHexomutase_a/b/a-II"/>
</dbReference>
<dbReference type="InterPro" id="IPR005846">
    <property type="entry name" value="A-D-PHexomutase_a/b/a-III"/>
</dbReference>
<dbReference type="InterPro" id="IPR005843">
    <property type="entry name" value="A-D-PHexomutase_C"/>
</dbReference>
<dbReference type="InterPro" id="IPR036900">
    <property type="entry name" value="A-D-PHexomutase_C_sf"/>
</dbReference>
<dbReference type="InterPro" id="IPR016066">
    <property type="entry name" value="A-D-PHexomutase_CS"/>
</dbReference>
<dbReference type="InterPro" id="IPR005841">
    <property type="entry name" value="Alpha-D-phosphohexomutase_SF"/>
</dbReference>
<dbReference type="InterPro" id="IPR006352">
    <property type="entry name" value="GlmM_bact"/>
</dbReference>
<dbReference type="InterPro" id="IPR050060">
    <property type="entry name" value="Phosphoglucosamine_mutase"/>
</dbReference>
<dbReference type="NCBIfam" id="TIGR01455">
    <property type="entry name" value="glmM"/>
    <property type="match status" value="1"/>
</dbReference>
<dbReference type="NCBIfam" id="NF008139">
    <property type="entry name" value="PRK10887.1"/>
    <property type="match status" value="1"/>
</dbReference>
<dbReference type="PANTHER" id="PTHR42946:SF1">
    <property type="entry name" value="PHOSPHOGLUCOMUTASE (ALPHA-D-GLUCOSE-1,6-BISPHOSPHATE-DEPENDENT)"/>
    <property type="match status" value="1"/>
</dbReference>
<dbReference type="PANTHER" id="PTHR42946">
    <property type="entry name" value="PHOSPHOHEXOSE MUTASE"/>
    <property type="match status" value="1"/>
</dbReference>
<dbReference type="Pfam" id="PF02878">
    <property type="entry name" value="PGM_PMM_I"/>
    <property type="match status" value="1"/>
</dbReference>
<dbReference type="Pfam" id="PF02879">
    <property type="entry name" value="PGM_PMM_II"/>
    <property type="match status" value="1"/>
</dbReference>
<dbReference type="Pfam" id="PF02880">
    <property type="entry name" value="PGM_PMM_III"/>
    <property type="match status" value="1"/>
</dbReference>
<dbReference type="Pfam" id="PF00408">
    <property type="entry name" value="PGM_PMM_IV"/>
    <property type="match status" value="1"/>
</dbReference>
<dbReference type="PRINTS" id="PR00509">
    <property type="entry name" value="PGMPMM"/>
</dbReference>
<dbReference type="SUPFAM" id="SSF55957">
    <property type="entry name" value="Phosphoglucomutase, C-terminal domain"/>
    <property type="match status" value="1"/>
</dbReference>
<dbReference type="SUPFAM" id="SSF53738">
    <property type="entry name" value="Phosphoglucomutase, first 3 domains"/>
    <property type="match status" value="3"/>
</dbReference>
<dbReference type="PROSITE" id="PS00710">
    <property type="entry name" value="PGM_PMM"/>
    <property type="match status" value="1"/>
</dbReference>
<accession>C3PL50</accession>
<reference key="1">
    <citation type="journal article" date="2010" name="BMC Genomics">
        <title>Complete genome sequence and lifestyle of black-pigmented Corynebacterium aurimucosum ATCC 700975 (formerly C. nigricans CN-1) isolated from a vaginal swab of a woman with spontaneous abortion.</title>
        <authorList>
            <person name="Trost E."/>
            <person name="Gotker S."/>
            <person name="Schneider J."/>
            <person name="Schneiker-Bekel S."/>
            <person name="Szczepanowski R."/>
            <person name="Tilker A."/>
            <person name="Viehoever P."/>
            <person name="Arnold W."/>
            <person name="Bekel T."/>
            <person name="Blom J."/>
            <person name="Gartemann K.H."/>
            <person name="Linke B."/>
            <person name="Goesmann A."/>
            <person name="Puhler A."/>
            <person name="Shukla S.K."/>
            <person name="Tauch A."/>
        </authorList>
    </citation>
    <scope>NUCLEOTIDE SEQUENCE [LARGE SCALE GENOMIC DNA]</scope>
    <source>
        <strain>ATCC 700975 / DSM 44827 / CIP 107346 / CN-1</strain>
    </source>
</reference>